<accession>P37799</accession>
<evidence type="ECO:0000250" key="1"/>
<evidence type="ECO:0000255" key="2">
    <source>
        <dbReference type="PROSITE-ProRule" id="PRU01066"/>
    </source>
</evidence>
<keyword id="KW-0092">Biotin</keyword>
<keyword id="KW-0275">Fatty acid biosynthesis</keyword>
<keyword id="KW-0276">Fatty acid metabolism</keyword>
<keyword id="KW-0444">Lipid biosynthesis</keyword>
<keyword id="KW-0443">Lipid metabolism</keyword>
<keyword id="KW-1185">Reference proteome</keyword>
<sequence length="156" mass="16455">MDIRKVKKLIELLEESGIDELEIREGEESVRISRHSKTAAQPVYAQAPAFAAPVAAPAPAAAAPAAAAAESAPAAPKLNGNVVRSPMVGTFYRAASPTSANFVEVGQSVKKGDILCIVEAMKMMNHIEAEVSGTIESILVENGQPVEFDQPLFTIV</sequence>
<protein>
    <recommendedName>
        <fullName>Biotin carboxyl carrier protein of acetyl-CoA carboxylase</fullName>
        <shortName>BCCP</shortName>
    </recommendedName>
</protein>
<dbReference type="EMBL" id="L14612">
    <property type="protein sequence ID" value="AAA16040.1"/>
    <property type="molecule type" value="Unassigned_DNA"/>
</dbReference>
<dbReference type="EMBL" id="AE004091">
    <property type="protein sequence ID" value="AAG08232.1"/>
    <property type="molecule type" value="Genomic_DNA"/>
</dbReference>
<dbReference type="PIR" id="A49342">
    <property type="entry name" value="A49342"/>
</dbReference>
<dbReference type="RefSeq" id="NP_253534.1">
    <property type="nucleotide sequence ID" value="NC_002516.2"/>
</dbReference>
<dbReference type="RefSeq" id="WP_003110495.1">
    <property type="nucleotide sequence ID" value="NZ_QZGE01000002.1"/>
</dbReference>
<dbReference type="SMR" id="P37799"/>
<dbReference type="FunCoup" id="P37799">
    <property type="interactions" value="579"/>
</dbReference>
<dbReference type="STRING" id="208964.PA4847"/>
<dbReference type="PaxDb" id="208964-PA4847"/>
<dbReference type="GeneID" id="77223395"/>
<dbReference type="GeneID" id="879557"/>
<dbReference type="KEGG" id="pae:PA4847"/>
<dbReference type="PATRIC" id="fig|208964.12.peg.5079"/>
<dbReference type="PseudoCAP" id="PA4847"/>
<dbReference type="HOGENOM" id="CLU_016733_3_1_6"/>
<dbReference type="InParanoid" id="P37799"/>
<dbReference type="OrthoDB" id="9811735at2"/>
<dbReference type="PhylomeDB" id="P37799"/>
<dbReference type="BioCyc" id="PAER208964:G1FZ6-4961-MONOMER"/>
<dbReference type="UniPathway" id="UPA00094"/>
<dbReference type="Proteomes" id="UP000002438">
    <property type="component" value="Chromosome"/>
</dbReference>
<dbReference type="GO" id="GO:0009317">
    <property type="term" value="C:acetyl-CoA carboxylase complex"/>
    <property type="evidence" value="ECO:0007669"/>
    <property type="project" value="InterPro"/>
</dbReference>
<dbReference type="GO" id="GO:0003989">
    <property type="term" value="F:acetyl-CoA carboxylase activity"/>
    <property type="evidence" value="ECO:0000318"/>
    <property type="project" value="GO_Central"/>
</dbReference>
<dbReference type="GO" id="GO:0006633">
    <property type="term" value="P:fatty acid biosynthetic process"/>
    <property type="evidence" value="ECO:0000318"/>
    <property type="project" value="GO_Central"/>
</dbReference>
<dbReference type="CDD" id="cd06850">
    <property type="entry name" value="biotinyl_domain"/>
    <property type="match status" value="1"/>
</dbReference>
<dbReference type="FunFam" id="2.40.50.100:FF:000003">
    <property type="entry name" value="Acetyl-CoA carboxylase biotin carboxyl carrier protein"/>
    <property type="match status" value="1"/>
</dbReference>
<dbReference type="Gene3D" id="2.40.50.100">
    <property type="match status" value="1"/>
</dbReference>
<dbReference type="InterPro" id="IPR001249">
    <property type="entry name" value="AcCoA_biotinCC"/>
</dbReference>
<dbReference type="InterPro" id="IPR001882">
    <property type="entry name" value="Biotin_BS"/>
</dbReference>
<dbReference type="InterPro" id="IPR050709">
    <property type="entry name" value="Biotin_Carboxyl_Carrier/Decarb"/>
</dbReference>
<dbReference type="InterPro" id="IPR000089">
    <property type="entry name" value="Biotin_lipoyl"/>
</dbReference>
<dbReference type="InterPro" id="IPR011053">
    <property type="entry name" value="Single_hybrid_motif"/>
</dbReference>
<dbReference type="NCBIfam" id="TIGR00531">
    <property type="entry name" value="BCCP"/>
    <property type="match status" value="1"/>
</dbReference>
<dbReference type="PANTHER" id="PTHR45266">
    <property type="entry name" value="OXALOACETATE DECARBOXYLASE ALPHA CHAIN"/>
    <property type="match status" value="1"/>
</dbReference>
<dbReference type="PANTHER" id="PTHR45266:SF3">
    <property type="entry name" value="OXALOACETATE DECARBOXYLASE ALPHA CHAIN"/>
    <property type="match status" value="1"/>
</dbReference>
<dbReference type="Pfam" id="PF00364">
    <property type="entry name" value="Biotin_lipoyl"/>
    <property type="match status" value="1"/>
</dbReference>
<dbReference type="PRINTS" id="PR01071">
    <property type="entry name" value="ACOABIOTINCC"/>
</dbReference>
<dbReference type="SUPFAM" id="SSF51230">
    <property type="entry name" value="Single hybrid motif"/>
    <property type="match status" value="1"/>
</dbReference>
<dbReference type="PROSITE" id="PS00188">
    <property type="entry name" value="BIOTIN"/>
    <property type="match status" value="1"/>
</dbReference>
<dbReference type="PROSITE" id="PS50968">
    <property type="entry name" value="BIOTINYL_LIPOYL"/>
    <property type="match status" value="1"/>
</dbReference>
<reference key="1">
    <citation type="journal article" date="1993" name="J. Bacteriol.">
        <title>Organization and nucleotide sequences of the genes encoding the biotin carboxyl carrier protein and biotin carboxylase protein of Pseudomonas aeruginosa acetyl coenzyme A carboxylase.</title>
        <authorList>
            <person name="Best E.A."/>
            <person name="Knauf V.C."/>
        </authorList>
    </citation>
    <scope>NUCLEOTIDE SEQUENCE [GENOMIC DNA]</scope>
    <source>
        <strain>ATCC 15692 / DSM 22644 / CIP 104116 / JCM 14847 / LMG 12228 / 1C / PRS 101 / PAO1</strain>
    </source>
</reference>
<reference key="2">
    <citation type="journal article" date="2000" name="Nature">
        <title>Complete genome sequence of Pseudomonas aeruginosa PAO1, an opportunistic pathogen.</title>
        <authorList>
            <person name="Stover C.K."/>
            <person name="Pham X.-Q.T."/>
            <person name="Erwin A.L."/>
            <person name="Mizoguchi S.D."/>
            <person name="Warrener P."/>
            <person name="Hickey M.J."/>
            <person name="Brinkman F.S.L."/>
            <person name="Hufnagle W.O."/>
            <person name="Kowalik D.J."/>
            <person name="Lagrou M."/>
            <person name="Garber R.L."/>
            <person name="Goltry L."/>
            <person name="Tolentino E."/>
            <person name="Westbrock-Wadman S."/>
            <person name="Yuan Y."/>
            <person name="Brody L.L."/>
            <person name="Coulter S.N."/>
            <person name="Folger K.R."/>
            <person name="Kas A."/>
            <person name="Larbig K."/>
            <person name="Lim R.M."/>
            <person name="Smith K.A."/>
            <person name="Spencer D.H."/>
            <person name="Wong G.K.-S."/>
            <person name="Wu Z."/>
            <person name="Paulsen I.T."/>
            <person name="Reizer J."/>
            <person name="Saier M.H. Jr."/>
            <person name="Hancock R.E.W."/>
            <person name="Lory S."/>
            <person name="Olson M.V."/>
        </authorList>
    </citation>
    <scope>NUCLEOTIDE SEQUENCE [LARGE SCALE GENOMIC DNA]</scope>
    <source>
        <strain>ATCC 15692 / DSM 22644 / CIP 104116 / JCM 14847 / LMG 12228 / 1C / PRS 101 / PAO1</strain>
    </source>
</reference>
<proteinExistence type="inferred from homology"/>
<comment type="function">
    <text evidence="1">This protein is a component of the acetyl coenzyme A carboxylase complex; first, biotin carboxylase catalyzes the carboxylation of the carrier protein and then the transcarboxylase transfers the carboxyl group to form malonyl-CoA.</text>
</comment>
<comment type="pathway">
    <text>Lipid metabolism; fatty acid biosynthesis.</text>
</comment>
<comment type="subunit">
    <text evidence="1">Homodimer.</text>
</comment>
<gene>
    <name type="primary">accB</name>
    <name type="synonym">fabE</name>
    <name type="ordered locus">PA4847</name>
</gene>
<feature type="chain" id="PRO_0000146810" description="Biotin carboxyl carrier protein of acetyl-CoA carboxylase">
    <location>
        <begin position="1"/>
        <end position="156"/>
    </location>
</feature>
<feature type="domain" description="Biotinyl-binding" evidence="2">
    <location>
        <begin position="80"/>
        <end position="156"/>
    </location>
</feature>
<feature type="modified residue" description="N6-biotinyllysine" evidence="1 2">
    <location>
        <position position="122"/>
    </location>
</feature>
<name>BCCP_PSEAE</name>
<organism>
    <name type="scientific">Pseudomonas aeruginosa (strain ATCC 15692 / DSM 22644 / CIP 104116 / JCM 14847 / LMG 12228 / 1C / PRS 101 / PAO1)</name>
    <dbReference type="NCBI Taxonomy" id="208964"/>
    <lineage>
        <taxon>Bacteria</taxon>
        <taxon>Pseudomonadati</taxon>
        <taxon>Pseudomonadota</taxon>
        <taxon>Gammaproteobacteria</taxon>
        <taxon>Pseudomonadales</taxon>
        <taxon>Pseudomonadaceae</taxon>
        <taxon>Pseudomonas</taxon>
    </lineage>
</organism>